<protein>
    <recommendedName>
        <fullName>Prominin-2</fullName>
        <shortName>PROM-2</shortName>
    </recommendedName>
    <alternativeName>
        <fullName>Prominin-like protein 2</fullName>
        <shortName>hPROML2</shortName>
    </alternativeName>
</protein>
<organism>
    <name type="scientific">Homo sapiens</name>
    <name type="common">Human</name>
    <dbReference type="NCBI Taxonomy" id="9606"/>
    <lineage>
        <taxon>Eukaryota</taxon>
        <taxon>Metazoa</taxon>
        <taxon>Chordata</taxon>
        <taxon>Craniata</taxon>
        <taxon>Vertebrata</taxon>
        <taxon>Euteleostomi</taxon>
        <taxon>Mammalia</taxon>
        <taxon>Eutheria</taxon>
        <taxon>Euarchontoglires</taxon>
        <taxon>Primates</taxon>
        <taxon>Haplorrhini</taxon>
        <taxon>Catarrhini</taxon>
        <taxon>Hominidae</taxon>
        <taxon>Homo</taxon>
    </lineage>
</organism>
<keyword id="KW-0025">Alternative splicing</keyword>
<keyword id="KW-1003">Cell membrane</keyword>
<keyword id="KW-0966">Cell projection</keyword>
<keyword id="KW-0969">Cilium</keyword>
<keyword id="KW-0325">Glycoprotein</keyword>
<keyword id="KW-0472">Membrane</keyword>
<keyword id="KW-0597">Phosphoprotein</keyword>
<keyword id="KW-1267">Proteomics identification</keyword>
<keyword id="KW-1185">Reference proteome</keyword>
<keyword id="KW-0732">Signal</keyword>
<keyword id="KW-0812">Transmembrane</keyword>
<keyword id="KW-1133">Transmembrane helix</keyword>
<name>PROM2_HUMAN</name>
<comment type="subunit">
    <text evidence="1">Binds cholesterol.</text>
</comment>
<comment type="interaction">
    <interactant intactId="EBI-18210782">
        <id>Q8N271</id>
    </interactant>
    <interactant intactId="EBI-19125216">
        <id>Q86WK6</id>
        <label>AMIGO1</label>
    </interactant>
    <organismsDiffer>false</organismsDiffer>
    <experiments>3</experiments>
</comment>
<comment type="interaction">
    <interactant intactId="EBI-18210782">
        <id>Q8N271</id>
    </interactant>
    <interactant intactId="EBI-13345167">
        <id>Q8TDT2</id>
        <label>GPR152</label>
    </interactant>
    <organismsDiffer>false</organismsDiffer>
    <experiments>3</experiments>
</comment>
<comment type="subcellular location">
    <subcellularLocation>
        <location evidence="1">Apical cell membrane</location>
        <topology evidence="1">Multi-pass membrane protein</topology>
    </subcellularLocation>
    <subcellularLocation>
        <location evidence="1">Basolateral cell membrane</location>
        <topology evidence="1">Multi-pass membrane protein</topology>
    </subcellularLocation>
    <subcellularLocation>
        <location evidence="1">Cell projection</location>
        <location evidence="1">Microvillus membrane</location>
        <topology evidence="1">Multi-pass membrane protein</topology>
    </subcellularLocation>
    <subcellularLocation>
        <location evidence="1">Cell projection</location>
        <location evidence="1">Cilium membrane</location>
        <topology evidence="1">Multi-pass membrane protein</topology>
    </subcellularLocation>
    <text evidence="1">Colocalizes with PROM1. Associates with membrane in a cholesterol-dependent manner. Localizes to the apical and basolateral membranes of epithelial cells (By similarity).</text>
</comment>
<comment type="alternative products">
    <event type="alternative splicing"/>
    <isoform>
        <id>Q8N271-1</id>
        <name>1</name>
        <sequence type="displayed"/>
    </isoform>
    <isoform>
        <id>Q8N271-2</id>
        <name>2</name>
        <sequence type="described" ref="VSP_033149"/>
    </isoform>
    <isoform>
        <id>Q8N271-3</id>
        <name>3</name>
        <sequence type="described" ref="VSP_033148"/>
    </isoform>
</comment>
<comment type="tissue specificity">
    <text evidence="4 5 8 9">Present in saliva within small membrane particles (at protein level). Expressed in kidney, prostate, trachea, esophagus, salivary gland, thyroid gland, mammary gland adrenal gland, placenta, stomach, spinal cord and liver. In submucosal tumor, expressed in spindle-shaped or stellate stromal cells. Expressed in prostate cancer cell lines.</text>
</comment>
<comment type="PTM">
    <text evidence="1">Glycosylated.</text>
</comment>
<comment type="similarity">
    <text evidence="13">Belongs to the prominin family.</text>
</comment>
<comment type="sequence caution" evidence="13">
    <conflict type="erroneous initiation">
        <sequence resource="EMBL-CDS" id="BAC03657"/>
    </conflict>
</comment>
<sequence>MKHTLALLAPLLGLGLGLALSQLAAGATDCKFLGPAEHLTFTPAARARWLAPRVRAPGLLDSLYGTVRRFLSVVQLNPFPSELVKALLNELASVKVNEVVRYEAGYVVCAVIAGLYLLLVPTAGLCFCCCRCHRRCGGRVKTEHKALACERAALMVFLLLTTLLLLIGVVCAFVTNQRTHEQMGPSIEAMPETLLSLWGLVSDVPQELQAVAQQFSLPQEQVSEELDGVGVSIGSAIHTQLRSSVYPLLAAVGSLGQVLQVSVHHLQTLNATVVELQAGQQDLEPAIREHRDRLLELLQEARCQGDCAGALSWARTLELGADFSQVPSVDHVLHQLKGVPEANFSSMVQEENSTFNALPALAAMQTSSVVQELKKAVAQQPEGVRTLAEGFPGLEAASRWAQALQEVEESSRPYLQEVQRYETYRWIVGCVLCSVVLFVVLCNLLGLNLGIWGLSARDDPSHPEAKGEAGARFLMAGVGLSFLFAAPLILLVFATFLVGGNVQTLVCQSWENGELFEFADTPGNLPPSMNLSQLLGLRKNISIHQAYQQCKEGAALWTVLQLNDSYDLEEHLDINQYTNKLRQELQSLKVDTQSLDLLSSAARRDLEALQSSGLQRIHYPDFLVQIQRPVVKTSMEQLAQELQGLAQAQDNSVLGQRLQEEAQGLRNLHQEKVVPQQSLVAKLNLSVRALESSAPNLQLETSDVLANVTYLKGELPAWAARILRNVSECFLAREMGYFSQYVAWVREEVTQRIATCQPLSGALDNSRVILCDMMADPWNAFWFCLAWCTFFLIPSIIFAVKTSKYFRPIRKRLSSTSSEETQLFHIPRVTSLKL</sequence>
<feature type="signal peptide" evidence="3">
    <location>
        <begin position="1"/>
        <end position="26"/>
    </location>
</feature>
<feature type="chain" id="PRO_0000331239" description="Prominin-2">
    <location>
        <begin position="27"/>
        <end position="834"/>
    </location>
</feature>
<feature type="topological domain" description="Extracellular" evidence="3">
    <location>
        <begin position="27"/>
        <end position="106"/>
    </location>
</feature>
<feature type="transmembrane region" description="Helical" evidence="3">
    <location>
        <begin position="107"/>
        <end position="127"/>
    </location>
</feature>
<feature type="topological domain" description="Cytoplasmic" evidence="3">
    <location>
        <begin position="128"/>
        <end position="153"/>
    </location>
</feature>
<feature type="transmembrane region" description="Helical" evidence="3">
    <location>
        <begin position="154"/>
        <end position="174"/>
    </location>
</feature>
<feature type="topological domain" description="Extracellular" evidence="3">
    <location>
        <begin position="175"/>
        <end position="426"/>
    </location>
</feature>
<feature type="transmembrane region" description="Helical" evidence="3">
    <location>
        <begin position="427"/>
        <end position="447"/>
    </location>
</feature>
<feature type="topological domain" description="Cytoplasmic" evidence="3">
    <location>
        <begin position="448"/>
        <end position="472"/>
    </location>
</feature>
<feature type="transmembrane region" description="Helical" evidence="3">
    <location>
        <begin position="473"/>
        <end position="493"/>
    </location>
</feature>
<feature type="topological domain" description="Extracellular" evidence="3">
    <location>
        <begin position="494"/>
        <end position="779"/>
    </location>
</feature>
<feature type="transmembrane region" description="Helical" evidence="3">
    <location>
        <begin position="780"/>
        <end position="800"/>
    </location>
</feature>
<feature type="topological domain" description="Cytoplasmic" evidence="3">
    <location>
        <begin position="801"/>
        <end position="834"/>
    </location>
</feature>
<feature type="modified residue" description="Phosphoserine" evidence="14">
    <location>
        <position position="727"/>
    </location>
</feature>
<feature type="modified residue" description="Phosphoserine" evidence="2">
    <location>
        <position position="818"/>
    </location>
</feature>
<feature type="glycosylation site" description="N-linked (GlcNAc...) asparagine" evidence="3">
    <location>
        <position position="270"/>
    </location>
</feature>
<feature type="splice variant" id="VSP_033148" description="In isoform 3." evidence="12">
    <location>
        <begin position="1"/>
        <end position="474"/>
    </location>
</feature>
<feature type="splice variant" id="VSP_033149" description="In isoform 2." evidence="11">
    <location>
        <begin position="576"/>
        <end position="624"/>
    </location>
</feature>
<feature type="sequence variant" id="VAR_042749" description="In dbSNP:rs12992066." evidence="5 6 7 10">
    <original>Q</original>
    <variation>R</variation>
    <location>
        <position position="508"/>
    </location>
</feature>
<feature type="sequence conflict" description="In Ref. 3; BAF83055." evidence="13" ref="3">
    <original>P</original>
    <variation>L</variation>
    <location>
        <position position="340"/>
    </location>
</feature>
<feature type="sequence conflict" description="In Ref. 3; BAC03657." evidence="13" ref="3">
    <original>G</original>
    <variation>S</variation>
    <location>
        <position position="513"/>
    </location>
</feature>
<feature type="sequence conflict" description="In Ref. 3; BAC03657." evidence="13" ref="3">
    <original>T</original>
    <variation>A</variation>
    <location>
        <position position="701"/>
    </location>
</feature>
<feature type="sequence conflict" description="In Ref. 3; BAC03657." evidence="13" ref="3">
    <original>V</original>
    <variation>I</variation>
    <location>
        <position position="704"/>
    </location>
</feature>
<gene>
    <name type="primary">PROM2</name>
    <name type="synonym">PROML2</name>
    <name type="ORF">UNQ2521/PRO6014</name>
</gene>
<accession>Q8N271</accession>
<accession>A8K2V1</accession>
<accession>Q2HIX6</accession>
<accession>Q8NB84</accession>
<accession>Q8TAE2</accession>
<dbReference type="EMBL" id="AF245303">
    <property type="protein sequence ID" value="AAM10541.1"/>
    <property type="molecule type" value="mRNA"/>
</dbReference>
<dbReference type="EMBL" id="AF245304">
    <property type="protein sequence ID" value="AAM10542.1"/>
    <property type="molecule type" value="mRNA"/>
</dbReference>
<dbReference type="EMBL" id="AY358377">
    <property type="protein sequence ID" value="AAQ88743.1"/>
    <property type="molecule type" value="mRNA"/>
</dbReference>
<dbReference type="EMBL" id="AK091175">
    <property type="protein sequence ID" value="BAC03599.1"/>
    <property type="molecule type" value="mRNA"/>
</dbReference>
<dbReference type="EMBL" id="AK091408">
    <property type="protein sequence ID" value="BAC03657.1"/>
    <property type="status" value="ALT_INIT"/>
    <property type="molecule type" value="mRNA"/>
</dbReference>
<dbReference type="EMBL" id="AK290366">
    <property type="protein sequence ID" value="BAF83055.1"/>
    <property type="molecule type" value="mRNA"/>
</dbReference>
<dbReference type="EMBL" id="AC009238">
    <property type="protein sequence ID" value="AAY14751.1"/>
    <property type="molecule type" value="Genomic_DNA"/>
</dbReference>
<dbReference type="EMBL" id="CH471219">
    <property type="protein sequence ID" value="EAX10718.1"/>
    <property type="molecule type" value="Genomic_DNA"/>
</dbReference>
<dbReference type="EMBL" id="BC113877">
    <property type="protein sequence ID" value="AAI13878.1"/>
    <property type="molecule type" value="mRNA"/>
</dbReference>
<dbReference type="EMBL" id="BC114525">
    <property type="protein sequence ID" value="AAI14526.1"/>
    <property type="molecule type" value="mRNA"/>
</dbReference>
<dbReference type="CCDS" id="CCDS2012.1">
    <molecule id="Q8N271-1"/>
</dbReference>
<dbReference type="RefSeq" id="NP_001159449.1">
    <molecule id="Q8N271-1"/>
    <property type="nucleotide sequence ID" value="NM_001165977.3"/>
</dbReference>
<dbReference type="RefSeq" id="NP_001159450.1">
    <molecule id="Q8N271-1"/>
    <property type="nucleotide sequence ID" value="NM_001165978.3"/>
</dbReference>
<dbReference type="RefSeq" id="NP_653308.2">
    <molecule id="Q8N271-1"/>
    <property type="nucleotide sequence ID" value="NM_144707.4"/>
</dbReference>
<dbReference type="BioGRID" id="127318">
    <property type="interactions" value="10"/>
</dbReference>
<dbReference type="FunCoup" id="Q8N271">
    <property type="interactions" value="104"/>
</dbReference>
<dbReference type="IntAct" id="Q8N271">
    <property type="interactions" value="3"/>
</dbReference>
<dbReference type="MINT" id="Q8N271"/>
<dbReference type="STRING" id="9606.ENSP00000318270"/>
<dbReference type="TCDB" id="9.B.411.1.2">
    <property type="family name" value="the prominin (prominin) family"/>
</dbReference>
<dbReference type="GlyConnect" id="1643">
    <property type="glycosylation" value="6 N-Linked glycans (2 sites)"/>
</dbReference>
<dbReference type="GlyCosmos" id="Q8N271">
    <property type="glycosylation" value="3 sites, 5 glycans"/>
</dbReference>
<dbReference type="GlyGen" id="Q8N271">
    <property type="glycosylation" value="5 sites, 17 N-linked glycans (3 sites)"/>
</dbReference>
<dbReference type="iPTMnet" id="Q8N271"/>
<dbReference type="PhosphoSitePlus" id="Q8N271"/>
<dbReference type="SwissPalm" id="Q8N271"/>
<dbReference type="BioMuta" id="PROM2"/>
<dbReference type="DMDM" id="74728673"/>
<dbReference type="jPOST" id="Q8N271"/>
<dbReference type="MassIVE" id="Q8N271"/>
<dbReference type="PaxDb" id="9606-ENSP00000318270"/>
<dbReference type="PeptideAtlas" id="Q8N271"/>
<dbReference type="ProteomicsDB" id="71663">
    <molecule id="Q8N271-1"/>
</dbReference>
<dbReference type="ProteomicsDB" id="71664">
    <molecule id="Q8N271-2"/>
</dbReference>
<dbReference type="ProteomicsDB" id="71665">
    <molecule id="Q8N271-3"/>
</dbReference>
<dbReference type="Antibodypedia" id="54175">
    <property type="antibodies" value="333 antibodies from 28 providers"/>
</dbReference>
<dbReference type="DNASU" id="150696"/>
<dbReference type="Ensembl" id="ENST00000317620.14">
    <molecule id="Q8N271-1"/>
    <property type="protein sequence ID" value="ENSP00000318270.9"/>
    <property type="gene ID" value="ENSG00000155066.16"/>
</dbReference>
<dbReference type="Ensembl" id="ENST00000317668.8">
    <molecule id="Q8N271-1"/>
    <property type="protein sequence ID" value="ENSP00000318520.4"/>
    <property type="gene ID" value="ENSG00000155066.16"/>
</dbReference>
<dbReference type="Ensembl" id="ENST00000403131.6">
    <molecule id="Q8N271-1"/>
    <property type="protein sequence ID" value="ENSP00000385716.2"/>
    <property type="gene ID" value="ENSG00000155066.16"/>
</dbReference>
<dbReference type="Ensembl" id="ENST00000709668.1">
    <molecule id="Q8N271-1"/>
    <property type="protein sequence ID" value="ENSP00000517820.1"/>
    <property type="gene ID" value="ENSG00000292084.1"/>
</dbReference>
<dbReference type="Ensembl" id="ENST00000709669.1">
    <molecule id="Q8N271-1"/>
    <property type="protein sequence ID" value="ENSP00000517821.1"/>
    <property type="gene ID" value="ENSG00000292084.1"/>
</dbReference>
<dbReference type="Ensembl" id="ENST00000709670.1">
    <molecule id="Q8N271-1"/>
    <property type="protein sequence ID" value="ENSP00000517822.1"/>
    <property type="gene ID" value="ENSG00000292084.1"/>
</dbReference>
<dbReference type="GeneID" id="150696"/>
<dbReference type="KEGG" id="hsa:150696"/>
<dbReference type="MANE-Select" id="ENST00000317620.14">
    <property type="protein sequence ID" value="ENSP00000318270.9"/>
    <property type="RefSeq nucleotide sequence ID" value="NM_001165978.3"/>
    <property type="RefSeq protein sequence ID" value="NP_001159450.1"/>
</dbReference>
<dbReference type="UCSC" id="uc002suh.3">
    <molecule id="Q8N271-1"/>
    <property type="organism name" value="human"/>
</dbReference>
<dbReference type="AGR" id="HGNC:20685"/>
<dbReference type="CTD" id="150696"/>
<dbReference type="DisGeNET" id="150696"/>
<dbReference type="GeneCards" id="PROM2"/>
<dbReference type="HGNC" id="HGNC:20685">
    <property type="gene designation" value="PROM2"/>
</dbReference>
<dbReference type="HPA" id="ENSG00000155066">
    <property type="expression patterns" value="Tissue enhanced (esophagus, skin)"/>
</dbReference>
<dbReference type="neXtProt" id="NX_Q8N271"/>
<dbReference type="OpenTargets" id="ENSG00000155066"/>
<dbReference type="PharmGKB" id="PA134861956"/>
<dbReference type="VEuPathDB" id="HostDB:ENSG00000155066"/>
<dbReference type="eggNOG" id="KOG4331">
    <property type="taxonomic scope" value="Eukaryota"/>
</dbReference>
<dbReference type="GeneTree" id="ENSGT00530000063586"/>
<dbReference type="HOGENOM" id="CLU_008293_2_0_1"/>
<dbReference type="InParanoid" id="Q8N271"/>
<dbReference type="OMA" id="CRSWENG"/>
<dbReference type="OrthoDB" id="6229420at2759"/>
<dbReference type="PAN-GO" id="Q8N271">
    <property type="GO annotations" value="7 GO annotations based on evolutionary models"/>
</dbReference>
<dbReference type="PhylomeDB" id="Q8N271"/>
<dbReference type="TreeFam" id="TF324631"/>
<dbReference type="PathwayCommons" id="Q8N271"/>
<dbReference type="SignaLink" id="Q8N271"/>
<dbReference type="BioGRID-ORCS" id="150696">
    <property type="hits" value="13 hits in 1146 CRISPR screens"/>
</dbReference>
<dbReference type="ChiTaRS" id="PROM2">
    <property type="organism name" value="human"/>
</dbReference>
<dbReference type="GenomeRNAi" id="150696"/>
<dbReference type="Pharos" id="Q8N271">
    <property type="development level" value="Tbio"/>
</dbReference>
<dbReference type="PRO" id="PR:Q8N271"/>
<dbReference type="Proteomes" id="UP000005640">
    <property type="component" value="Chromosome 2"/>
</dbReference>
<dbReference type="RNAct" id="Q8N271">
    <property type="molecule type" value="protein"/>
</dbReference>
<dbReference type="Bgee" id="ENSG00000155066">
    <property type="expression patterns" value="Expressed in esophagus squamous epithelium and 160 other cell types or tissues"/>
</dbReference>
<dbReference type="ExpressionAtlas" id="Q8N271">
    <property type="expression patterns" value="baseline and differential"/>
</dbReference>
<dbReference type="GO" id="GO:0016324">
    <property type="term" value="C:apical plasma membrane"/>
    <property type="evidence" value="ECO:0007669"/>
    <property type="project" value="UniProtKB-SubCell"/>
</dbReference>
<dbReference type="GO" id="GO:0016323">
    <property type="term" value="C:basolateral plasma membrane"/>
    <property type="evidence" value="ECO:0007669"/>
    <property type="project" value="UniProtKB-SubCell"/>
</dbReference>
<dbReference type="GO" id="GO:0042995">
    <property type="term" value="C:cell projection"/>
    <property type="evidence" value="ECO:0000314"/>
    <property type="project" value="UniProtKB"/>
</dbReference>
<dbReference type="GO" id="GO:0009986">
    <property type="term" value="C:cell surface"/>
    <property type="evidence" value="ECO:0000250"/>
    <property type="project" value="CAFA"/>
</dbReference>
<dbReference type="GO" id="GO:0060170">
    <property type="term" value="C:ciliary membrane"/>
    <property type="evidence" value="ECO:0007669"/>
    <property type="project" value="UniProtKB-SubCell"/>
</dbReference>
<dbReference type="GO" id="GO:0005929">
    <property type="term" value="C:cilium"/>
    <property type="evidence" value="ECO:0000250"/>
    <property type="project" value="CAFA"/>
</dbReference>
<dbReference type="GO" id="GO:0031410">
    <property type="term" value="C:cytoplasmic vesicle"/>
    <property type="evidence" value="ECO:0000250"/>
    <property type="project" value="CAFA"/>
</dbReference>
<dbReference type="GO" id="GO:0070062">
    <property type="term" value="C:extracellular exosome"/>
    <property type="evidence" value="ECO:0007005"/>
    <property type="project" value="UniProtKB"/>
</dbReference>
<dbReference type="GO" id="GO:0044393">
    <property type="term" value="C:microspike"/>
    <property type="evidence" value="ECO:0000250"/>
    <property type="project" value="CAFA"/>
</dbReference>
<dbReference type="GO" id="GO:0005902">
    <property type="term" value="C:microvillus"/>
    <property type="evidence" value="ECO:0000250"/>
    <property type="project" value="CAFA"/>
</dbReference>
<dbReference type="GO" id="GO:0031528">
    <property type="term" value="C:microvillus membrane"/>
    <property type="evidence" value="ECO:0007669"/>
    <property type="project" value="UniProtKB-SubCell"/>
</dbReference>
<dbReference type="GO" id="GO:0005886">
    <property type="term" value="C:plasma membrane"/>
    <property type="evidence" value="ECO:0000250"/>
    <property type="project" value="CAFA"/>
</dbReference>
<dbReference type="GO" id="GO:0071914">
    <property type="term" value="C:prominosome"/>
    <property type="evidence" value="ECO:0000250"/>
    <property type="project" value="CAFA"/>
</dbReference>
<dbReference type="GO" id="GO:0015485">
    <property type="term" value="F:cholesterol binding"/>
    <property type="evidence" value="ECO:0000250"/>
    <property type="project" value="CAFA"/>
</dbReference>
<dbReference type="GO" id="GO:2001287">
    <property type="term" value="P:negative regulation of caveolin-mediated endocytosis"/>
    <property type="evidence" value="ECO:0000314"/>
    <property type="project" value="UniProtKB"/>
</dbReference>
<dbReference type="GO" id="GO:0048550">
    <property type="term" value="P:negative regulation of pinocytosis"/>
    <property type="evidence" value="ECO:0000314"/>
    <property type="project" value="UniProtKB"/>
</dbReference>
<dbReference type="GO" id="GO:0031346">
    <property type="term" value="P:positive regulation of cell projection organization"/>
    <property type="evidence" value="ECO:0000314"/>
    <property type="project" value="UniProtKB"/>
</dbReference>
<dbReference type="GO" id="GO:0001934">
    <property type="term" value="P:positive regulation of protein phosphorylation"/>
    <property type="evidence" value="ECO:0000314"/>
    <property type="project" value="UniProtKB"/>
</dbReference>
<dbReference type="GO" id="GO:0043087">
    <property type="term" value="P:regulation of GTPase activity"/>
    <property type="evidence" value="ECO:0000314"/>
    <property type="project" value="UniProtKB"/>
</dbReference>
<dbReference type="InterPro" id="IPR008795">
    <property type="entry name" value="Prominin"/>
</dbReference>
<dbReference type="PANTHER" id="PTHR22730">
    <property type="entry name" value="PROMININ PROM PROTEIN"/>
    <property type="match status" value="1"/>
</dbReference>
<dbReference type="PANTHER" id="PTHR22730:SF6">
    <property type="entry name" value="PROMININ-2"/>
    <property type="match status" value="1"/>
</dbReference>
<dbReference type="Pfam" id="PF05478">
    <property type="entry name" value="Prominin"/>
    <property type="match status" value="1"/>
</dbReference>
<evidence type="ECO:0000250" key="1"/>
<evidence type="ECO:0000250" key="2">
    <source>
        <dbReference type="UniProtKB" id="Q8CJ52"/>
    </source>
</evidence>
<evidence type="ECO:0000255" key="3"/>
<evidence type="ECO:0000269" key="4">
    <source>
    </source>
</evidence>
<evidence type="ECO:0000269" key="5">
    <source>
    </source>
</evidence>
<evidence type="ECO:0000269" key="6">
    <source>
    </source>
</evidence>
<evidence type="ECO:0000269" key="7">
    <source>
    </source>
</evidence>
<evidence type="ECO:0000269" key="8">
    <source>
    </source>
</evidence>
<evidence type="ECO:0000269" key="9">
    <source>
    </source>
</evidence>
<evidence type="ECO:0000269" key="10">
    <source ref="5"/>
</evidence>
<evidence type="ECO:0000303" key="11">
    <source>
    </source>
</evidence>
<evidence type="ECO:0000303" key="12">
    <source>
    </source>
</evidence>
<evidence type="ECO:0000305" key="13"/>
<evidence type="ECO:0007744" key="14">
    <source>
    </source>
</evidence>
<reference key="1">
    <citation type="journal article" date="2003" name="J. Biol. Chem.">
        <title>Characterization of prominin-2, a new member of the prominin family of pentaspan membrane glycoproteins.</title>
        <authorList>
            <person name="Fargeas C.A."/>
            <person name="Florek M."/>
            <person name="Huttner W.B."/>
            <person name="Corbeil D."/>
        </authorList>
    </citation>
    <scope>NUCLEOTIDE SEQUENCE [MRNA] (ISOFORM 1)</scope>
    <scope>TISSUE SPECIFICITY</scope>
    <scope>VARIANT ARG-508</scope>
    <source>
        <tissue>Kidney</tissue>
    </source>
</reference>
<reference key="2">
    <citation type="journal article" date="2003" name="Genome Res.">
        <title>The secreted protein discovery initiative (SPDI), a large-scale effort to identify novel human secreted and transmembrane proteins: a bioinformatics assessment.</title>
        <authorList>
            <person name="Clark H.F."/>
            <person name="Gurney A.L."/>
            <person name="Abaya E."/>
            <person name="Baker K."/>
            <person name="Baldwin D.T."/>
            <person name="Brush J."/>
            <person name="Chen J."/>
            <person name="Chow B."/>
            <person name="Chui C."/>
            <person name="Crowley C."/>
            <person name="Currell B."/>
            <person name="Deuel B."/>
            <person name="Dowd P."/>
            <person name="Eaton D."/>
            <person name="Foster J.S."/>
            <person name="Grimaldi C."/>
            <person name="Gu Q."/>
            <person name="Hass P.E."/>
            <person name="Heldens S."/>
            <person name="Huang A."/>
            <person name="Kim H.S."/>
            <person name="Klimowski L."/>
            <person name="Jin Y."/>
            <person name="Johnson S."/>
            <person name="Lee J."/>
            <person name="Lewis L."/>
            <person name="Liao D."/>
            <person name="Mark M.R."/>
            <person name="Robbie E."/>
            <person name="Sanchez C."/>
            <person name="Schoenfeld J."/>
            <person name="Seshagiri S."/>
            <person name="Simmons L."/>
            <person name="Singh J."/>
            <person name="Smith V."/>
            <person name="Stinson J."/>
            <person name="Vagts A."/>
            <person name="Vandlen R.L."/>
            <person name="Watanabe C."/>
            <person name="Wieand D."/>
            <person name="Woods K."/>
            <person name="Xie M.-H."/>
            <person name="Yansura D.G."/>
            <person name="Yi S."/>
            <person name="Yu G."/>
            <person name="Yuan J."/>
            <person name="Zhang M."/>
            <person name="Zhang Z."/>
            <person name="Goddard A.D."/>
            <person name="Wood W.I."/>
            <person name="Godowski P.J."/>
            <person name="Gray A.M."/>
        </authorList>
    </citation>
    <scope>NUCLEOTIDE SEQUENCE [LARGE SCALE MRNA] (ISOFORM 1)</scope>
    <scope>VARIANT ARG-508</scope>
</reference>
<reference key="3">
    <citation type="journal article" date="2004" name="Nat. Genet.">
        <title>Complete sequencing and characterization of 21,243 full-length human cDNAs.</title>
        <authorList>
            <person name="Ota T."/>
            <person name="Suzuki Y."/>
            <person name="Nishikawa T."/>
            <person name="Otsuki T."/>
            <person name="Sugiyama T."/>
            <person name="Irie R."/>
            <person name="Wakamatsu A."/>
            <person name="Hayashi K."/>
            <person name="Sato H."/>
            <person name="Nagai K."/>
            <person name="Kimura K."/>
            <person name="Makita H."/>
            <person name="Sekine M."/>
            <person name="Obayashi M."/>
            <person name="Nishi T."/>
            <person name="Shibahara T."/>
            <person name="Tanaka T."/>
            <person name="Ishii S."/>
            <person name="Yamamoto J."/>
            <person name="Saito K."/>
            <person name="Kawai Y."/>
            <person name="Isono Y."/>
            <person name="Nakamura Y."/>
            <person name="Nagahari K."/>
            <person name="Murakami K."/>
            <person name="Yasuda T."/>
            <person name="Iwayanagi T."/>
            <person name="Wagatsuma M."/>
            <person name="Shiratori A."/>
            <person name="Sudo H."/>
            <person name="Hosoiri T."/>
            <person name="Kaku Y."/>
            <person name="Kodaira H."/>
            <person name="Kondo H."/>
            <person name="Sugawara M."/>
            <person name="Takahashi M."/>
            <person name="Kanda K."/>
            <person name="Yokoi T."/>
            <person name="Furuya T."/>
            <person name="Kikkawa E."/>
            <person name="Omura Y."/>
            <person name="Abe K."/>
            <person name="Kamihara K."/>
            <person name="Katsuta N."/>
            <person name="Sato K."/>
            <person name="Tanikawa M."/>
            <person name="Yamazaki M."/>
            <person name="Ninomiya K."/>
            <person name="Ishibashi T."/>
            <person name="Yamashita H."/>
            <person name="Murakawa K."/>
            <person name="Fujimori K."/>
            <person name="Tanai H."/>
            <person name="Kimata M."/>
            <person name="Watanabe M."/>
            <person name="Hiraoka S."/>
            <person name="Chiba Y."/>
            <person name="Ishida S."/>
            <person name="Ono Y."/>
            <person name="Takiguchi S."/>
            <person name="Watanabe S."/>
            <person name="Yosida M."/>
            <person name="Hotuta T."/>
            <person name="Kusano J."/>
            <person name="Kanehori K."/>
            <person name="Takahashi-Fujii A."/>
            <person name="Hara H."/>
            <person name="Tanase T.-O."/>
            <person name="Nomura Y."/>
            <person name="Togiya S."/>
            <person name="Komai F."/>
            <person name="Hara R."/>
            <person name="Takeuchi K."/>
            <person name="Arita M."/>
            <person name="Imose N."/>
            <person name="Musashino K."/>
            <person name="Yuuki H."/>
            <person name="Oshima A."/>
            <person name="Sasaki N."/>
            <person name="Aotsuka S."/>
            <person name="Yoshikawa Y."/>
            <person name="Matsunawa H."/>
            <person name="Ichihara T."/>
            <person name="Shiohata N."/>
            <person name="Sano S."/>
            <person name="Moriya S."/>
            <person name="Momiyama H."/>
            <person name="Satoh N."/>
            <person name="Takami S."/>
            <person name="Terashima Y."/>
            <person name="Suzuki O."/>
            <person name="Nakagawa S."/>
            <person name="Senoh A."/>
            <person name="Mizoguchi H."/>
            <person name="Goto Y."/>
            <person name="Shimizu F."/>
            <person name="Wakebe H."/>
            <person name="Hishigaki H."/>
            <person name="Watanabe T."/>
            <person name="Sugiyama A."/>
            <person name="Takemoto M."/>
            <person name="Kawakami B."/>
            <person name="Yamazaki M."/>
            <person name="Watanabe K."/>
            <person name="Kumagai A."/>
            <person name="Itakura S."/>
            <person name="Fukuzumi Y."/>
            <person name="Fujimori Y."/>
            <person name="Komiyama M."/>
            <person name="Tashiro H."/>
            <person name="Tanigami A."/>
            <person name="Fujiwara T."/>
            <person name="Ono T."/>
            <person name="Yamada K."/>
            <person name="Fujii Y."/>
            <person name="Ozaki K."/>
            <person name="Hirao M."/>
            <person name="Ohmori Y."/>
            <person name="Kawabata A."/>
            <person name="Hikiji T."/>
            <person name="Kobatake N."/>
            <person name="Inagaki H."/>
            <person name="Ikema Y."/>
            <person name="Okamoto S."/>
            <person name="Okitani R."/>
            <person name="Kawakami T."/>
            <person name="Noguchi S."/>
            <person name="Itoh T."/>
            <person name="Shigeta K."/>
            <person name="Senba T."/>
            <person name="Matsumura K."/>
            <person name="Nakajima Y."/>
            <person name="Mizuno T."/>
            <person name="Morinaga M."/>
            <person name="Sasaki M."/>
            <person name="Togashi T."/>
            <person name="Oyama M."/>
            <person name="Hata H."/>
            <person name="Watanabe M."/>
            <person name="Komatsu T."/>
            <person name="Mizushima-Sugano J."/>
            <person name="Satoh T."/>
            <person name="Shirai Y."/>
            <person name="Takahashi Y."/>
            <person name="Nakagawa K."/>
            <person name="Okumura K."/>
            <person name="Nagase T."/>
            <person name="Nomura N."/>
            <person name="Kikuchi H."/>
            <person name="Masuho Y."/>
            <person name="Yamashita R."/>
            <person name="Nakai K."/>
            <person name="Yada T."/>
            <person name="Nakamura Y."/>
            <person name="Ohara O."/>
            <person name="Isogai T."/>
            <person name="Sugano S."/>
        </authorList>
    </citation>
    <scope>NUCLEOTIDE SEQUENCE [LARGE SCALE MRNA] (ISOFORM 1)</scope>
    <scope>NUCLEOTIDE SEQUENCE [LARGE SCALE MRNA] OF 433-834 (ISOFORM 2)</scope>
    <source>
        <tissue>Brain</tissue>
        <tissue>Tongue</tissue>
    </source>
</reference>
<reference key="4">
    <citation type="journal article" date="2005" name="Nature">
        <title>Generation and annotation of the DNA sequences of human chromosomes 2 and 4.</title>
        <authorList>
            <person name="Hillier L.W."/>
            <person name="Graves T.A."/>
            <person name="Fulton R.S."/>
            <person name="Fulton L.A."/>
            <person name="Pepin K.H."/>
            <person name="Minx P."/>
            <person name="Wagner-McPherson C."/>
            <person name="Layman D."/>
            <person name="Wylie K."/>
            <person name="Sekhon M."/>
            <person name="Becker M.C."/>
            <person name="Fewell G.A."/>
            <person name="Delehaunty K.D."/>
            <person name="Miner T.L."/>
            <person name="Nash W.E."/>
            <person name="Kremitzki C."/>
            <person name="Oddy L."/>
            <person name="Du H."/>
            <person name="Sun H."/>
            <person name="Bradshaw-Cordum H."/>
            <person name="Ali J."/>
            <person name="Carter J."/>
            <person name="Cordes M."/>
            <person name="Harris A."/>
            <person name="Isak A."/>
            <person name="van Brunt A."/>
            <person name="Nguyen C."/>
            <person name="Du F."/>
            <person name="Courtney L."/>
            <person name="Kalicki J."/>
            <person name="Ozersky P."/>
            <person name="Abbott S."/>
            <person name="Armstrong J."/>
            <person name="Belter E.A."/>
            <person name="Caruso L."/>
            <person name="Cedroni M."/>
            <person name="Cotton M."/>
            <person name="Davidson T."/>
            <person name="Desai A."/>
            <person name="Elliott G."/>
            <person name="Erb T."/>
            <person name="Fronick C."/>
            <person name="Gaige T."/>
            <person name="Haakenson W."/>
            <person name="Haglund K."/>
            <person name="Holmes A."/>
            <person name="Harkins R."/>
            <person name="Kim K."/>
            <person name="Kruchowski S.S."/>
            <person name="Strong C.M."/>
            <person name="Grewal N."/>
            <person name="Goyea E."/>
            <person name="Hou S."/>
            <person name="Levy A."/>
            <person name="Martinka S."/>
            <person name="Mead K."/>
            <person name="McLellan M.D."/>
            <person name="Meyer R."/>
            <person name="Randall-Maher J."/>
            <person name="Tomlinson C."/>
            <person name="Dauphin-Kohlberg S."/>
            <person name="Kozlowicz-Reilly A."/>
            <person name="Shah N."/>
            <person name="Swearengen-Shahid S."/>
            <person name="Snider J."/>
            <person name="Strong J.T."/>
            <person name="Thompson J."/>
            <person name="Yoakum M."/>
            <person name="Leonard S."/>
            <person name="Pearman C."/>
            <person name="Trani L."/>
            <person name="Radionenko M."/>
            <person name="Waligorski J.E."/>
            <person name="Wang C."/>
            <person name="Rock S.M."/>
            <person name="Tin-Wollam A.-M."/>
            <person name="Maupin R."/>
            <person name="Latreille P."/>
            <person name="Wendl M.C."/>
            <person name="Yang S.-P."/>
            <person name="Pohl C."/>
            <person name="Wallis J.W."/>
            <person name="Spieth J."/>
            <person name="Bieri T.A."/>
            <person name="Berkowicz N."/>
            <person name="Nelson J.O."/>
            <person name="Osborne J."/>
            <person name="Ding L."/>
            <person name="Meyer R."/>
            <person name="Sabo A."/>
            <person name="Shotland Y."/>
            <person name="Sinha P."/>
            <person name="Wohldmann P.E."/>
            <person name="Cook L.L."/>
            <person name="Hickenbotham M.T."/>
            <person name="Eldred J."/>
            <person name="Williams D."/>
            <person name="Jones T.A."/>
            <person name="She X."/>
            <person name="Ciccarelli F.D."/>
            <person name="Izaurralde E."/>
            <person name="Taylor J."/>
            <person name="Schmutz J."/>
            <person name="Myers R.M."/>
            <person name="Cox D.R."/>
            <person name="Huang X."/>
            <person name="McPherson J.D."/>
            <person name="Mardis E.R."/>
            <person name="Clifton S.W."/>
            <person name="Warren W.C."/>
            <person name="Chinwalla A.T."/>
            <person name="Eddy S.R."/>
            <person name="Marra M.A."/>
            <person name="Ovcharenko I."/>
            <person name="Furey T.S."/>
            <person name="Miller W."/>
            <person name="Eichler E.E."/>
            <person name="Bork P."/>
            <person name="Suyama M."/>
            <person name="Torrents D."/>
            <person name="Waterston R.H."/>
            <person name="Wilson R.K."/>
        </authorList>
    </citation>
    <scope>NUCLEOTIDE SEQUENCE [LARGE SCALE GENOMIC DNA]</scope>
</reference>
<reference key="5">
    <citation type="submission" date="2005-07" db="EMBL/GenBank/DDBJ databases">
        <authorList>
            <person name="Mural R.J."/>
            <person name="Istrail S."/>
            <person name="Sutton G.G."/>
            <person name="Florea L."/>
            <person name="Halpern A.L."/>
            <person name="Mobarry C.M."/>
            <person name="Lippert R."/>
            <person name="Walenz B."/>
            <person name="Shatkay H."/>
            <person name="Dew I."/>
            <person name="Miller J.R."/>
            <person name="Flanigan M.J."/>
            <person name="Edwards N.J."/>
            <person name="Bolanos R."/>
            <person name="Fasulo D."/>
            <person name="Halldorsson B.V."/>
            <person name="Hannenhalli S."/>
            <person name="Turner R."/>
            <person name="Yooseph S."/>
            <person name="Lu F."/>
            <person name="Nusskern D.R."/>
            <person name="Shue B.C."/>
            <person name="Zheng X.H."/>
            <person name="Zhong F."/>
            <person name="Delcher A.L."/>
            <person name="Huson D.H."/>
            <person name="Kravitz S.A."/>
            <person name="Mouchard L."/>
            <person name="Reinert K."/>
            <person name="Remington K.A."/>
            <person name="Clark A.G."/>
            <person name="Waterman M.S."/>
            <person name="Eichler E.E."/>
            <person name="Adams M.D."/>
            <person name="Hunkapiller M.W."/>
            <person name="Myers E.W."/>
            <person name="Venter J.C."/>
        </authorList>
    </citation>
    <scope>NUCLEOTIDE SEQUENCE [LARGE SCALE GENOMIC DNA]</scope>
    <scope>VARIANT ARG-508</scope>
</reference>
<reference key="6">
    <citation type="journal article" date="2004" name="Genome Res.">
        <title>The status, quality, and expansion of the NIH full-length cDNA project: the Mammalian Gene Collection (MGC).</title>
        <authorList>
            <consortium name="The MGC Project Team"/>
        </authorList>
    </citation>
    <scope>NUCLEOTIDE SEQUENCE [LARGE SCALE MRNA] (ISOFORMS 1 AND 3)</scope>
    <scope>VARIANT ARG-508</scope>
</reference>
<reference key="7">
    <citation type="journal article" date="2002" name="Endocrinology">
        <title>Identification and characterization of a novel testosterone-regulated prominin-like gene in the rat ventral prostate.</title>
        <authorList>
            <person name="Zhang Q."/>
            <person name="Haleem R."/>
            <person name="Cai X."/>
            <person name="Wang Z."/>
        </authorList>
    </citation>
    <scope>TISSUE SPECIFICITY</scope>
</reference>
<reference key="8">
    <citation type="journal article" date="2006" name="Virchows Arch.">
        <title>An ultrastructural and immunohistochemical study of a combined submucosal granular cell tumor and lipoma of the colon showing a unique nodule-in-nodule structure: putative implication of CD34 or prominin-2-positive stromal cells in its histopathogenesis.</title>
        <authorList>
            <person name="Mori T."/>
            <person name="Orikasa H."/>
            <person name="Shigematsu T."/>
            <person name="Yamazaki K."/>
        </authorList>
    </citation>
    <scope>TISSUE SPECIFICITY</scope>
</reference>
<reference key="9">
    <citation type="journal article" date="2007" name="Histochem. Cell Biol.">
        <title>Differential expression of prominin-1 (CD133) and prominin-2 in major cephalic exocrine glands of adult mice.</title>
        <authorList>
            <person name="Jaszai J."/>
            <person name="Janich P."/>
            <person name="Farkas L.M."/>
            <person name="Fargeas C.A."/>
            <person name="Huttner W.B."/>
            <person name="Corbeil D."/>
        </authorList>
    </citation>
    <scope>TISSUE SPECIFICITY</scope>
</reference>
<reference key="10">
    <citation type="journal article" date="2009" name="Sci. Signal.">
        <title>Quantitative phosphoproteomic analysis of T cell receptor signaling reveals system-wide modulation of protein-protein interactions.</title>
        <authorList>
            <person name="Mayya V."/>
            <person name="Lundgren D.H."/>
            <person name="Hwang S.-I."/>
            <person name="Rezaul K."/>
            <person name="Wu L."/>
            <person name="Eng J.K."/>
            <person name="Rodionov V."/>
            <person name="Han D.K."/>
        </authorList>
    </citation>
    <scope>PHOSPHORYLATION [LARGE SCALE ANALYSIS] AT SER-727</scope>
    <scope>IDENTIFICATION BY MASS SPECTROMETRY [LARGE SCALE ANALYSIS]</scope>
    <source>
        <tissue>Leukemic T-cell</tissue>
    </source>
</reference>
<proteinExistence type="evidence at protein level"/>